<dbReference type="EC" id="3.4.24.-"/>
<dbReference type="BRENDA" id="3.4.24.B36">
    <property type="organism ID" value="10997"/>
</dbReference>
<dbReference type="GO" id="GO:0005576">
    <property type="term" value="C:extracellular region"/>
    <property type="evidence" value="ECO:0000303"/>
    <property type="project" value="UniProtKB"/>
</dbReference>
<dbReference type="GO" id="GO:0043655">
    <property type="term" value="C:host extracellular space"/>
    <property type="evidence" value="ECO:0000303"/>
    <property type="project" value="UniProtKB"/>
</dbReference>
<dbReference type="GO" id="GO:0046872">
    <property type="term" value="F:metal ion binding"/>
    <property type="evidence" value="ECO:0000314"/>
    <property type="project" value="UniProtKB"/>
</dbReference>
<dbReference type="GO" id="GO:0008237">
    <property type="term" value="F:metallopeptidase activity"/>
    <property type="evidence" value="ECO:0000314"/>
    <property type="project" value="UniProtKB"/>
</dbReference>
<dbReference type="GO" id="GO:0090729">
    <property type="term" value="F:toxin activity"/>
    <property type="evidence" value="ECO:0007669"/>
    <property type="project" value="UniProtKB-KW"/>
</dbReference>
<dbReference type="GO" id="GO:0006508">
    <property type="term" value="P:proteolysis"/>
    <property type="evidence" value="ECO:0007669"/>
    <property type="project" value="UniProtKB-KW"/>
</dbReference>
<dbReference type="GO" id="GO:0044485">
    <property type="term" value="P:venom-mediated fibrinogenolysis in another organism"/>
    <property type="evidence" value="ECO:0000314"/>
    <property type="project" value="UniProtKB"/>
</dbReference>
<dbReference type="GO" id="GO:0044358">
    <property type="term" value="P:venom-mediated hemorrhage in another organism"/>
    <property type="evidence" value="ECO:0000314"/>
    <property type="project" value="UniProtKB"/>
</dbReference>
<organism>
    <name type="scientific">Vipera ammodytes ammodytes</name>
    <name type="common">Western sand viper</name>
    <dbReference type="NCBI Taxonomy" id="8705"/>
    <lineage>
        <taxon>Eukaryota</taxon>
        <taxon>Metazoa</taxon>
        <taxon>Chordata</taxon>
        <taxon>Craniata</taxon>
        <taxon>Vertebrata</taxon>
        <taxon>Euteleostomi</taxon>
        <taxon>Lepidosauria</taxon>
        <taxon>Squamata</taxon>
        <taxon>Bifurcata</taxon>
        <taxon>Unidentata</taxon>
        <taxon>Episquamata</taxon>
        <taxon>Toxicofera</taxon>
        <taxon>Serpentes</taxon>
        <taxon>Colubroidea</taxon>
        <taxon>Viperidae</taxon>
        <taxon>Viperinae</taxon>
        <taxon>Vipera</taxon>
    </lineage>
</organism>
<accession>P0DJ44</accession>
<name>VM3_VIPAA</name>
<comment type="function">
    <text evidence="3">Snake venom zinc metalloprotease that exhibits strong hemorrhagic activity. It also degrades alpha-chain of fibrinogen (FGA), but not the beta- and the gamma-chains. Possesses potent azocaseinolytic activity and cleaves insulin B-chain, hydrolyzing it at positions Ala(14)-Leu(15), followed by Tyr(16)-Leu(17) and His(10)-Leu(11). In vivo, subcutaneous injection into mice induces strong hemorrhage.</text>
</comment>
<comment type="cofactor">
    <cofactor evidence="1">
        <name>Zn(2+)</name>
        <dbReference type="ChEBI" id="CHEBI:29105"/>
    </cofactor>
    <text evidence="1">Binds 1 zinc ion per subunit.</text>
</comment>
<comment type="activity regulation">
    <text evidence="3">Inhibited by EDTA, but not inhibited by iodoacetamide, PMSF and pepstatin A.</text>
</comment>
<comment type="biophysicochemical properties">
    <phDependence>
        <text evidence="3">Optimum pH is 7.5.</text>
    </phDependence>
</comment>
<comment type="subunit">
    <text evidence="3">Monomer.</text>
</comment>
<comment type="subcellular location">
    <subcellularLocation>
        <location>Secreted</location>
    </subcellularLocation>
</comment>
<comment type="tissue specificity">
    <text>Expressed by the venom gland.</text>
</comment>
<comment type="PTM">
    <text>The N-terminus is blocked.</text>
</comment>
<comment type="PTM">
    <text>Glycosylated.</text>
</comment>
<comment type="similarity">
    <text evidence="4">Belongs to the venom metalloproteinase (M12B) family. P-III subfamily. P-IIIa sub-subfamily.</text>
</comment>
<protein>
    <recommendedName>
        <fullName>Zinc metalloproteinase-disintegrin-like VaH1</fullName>
        <ecNumber>3.4.24.-</ecNumber>
    </recommendedName>
    <alternativeName>
        <fullName>Snake venom metalloprotease</fullName>
        <shortName>SVMP</shortName>
    </alternativeName>
</protein>
<feature type="chain" id="PRO_0000418197" description="Zinc metalloproteinase-disintegrin-like VaH1">
    <location>
        <begin position="1" status="less than"/>
        <end position="36" status="greater than"/>
    </location>
</feature>
<feature type="domain" description="Peptidase M12B" evidence="2">
    <location>
        <begin position="1" status="less than"/>
        <end position="36" status="greater than"/>
    </location>
</feature>
<feature type="disulfide bond">
    <location>
        <begin position="25"/>
        <end status="unknown"/>
    </location>
</feature>
<feature type="non-consecutive residues" evidence="4">
    <location>
        <begin position="9"/>
        <end position="10"/>
    </location>
</feature>
<feature type="non-terminal residue">
    <location>
        <position position="1"/>
    </location>
</feature>
<feature type="non-terminal residue">
    <location>
        <position position="36"/>
    </location>
</feature>
<reference key="1">
    <citation type="journal article" date="2002" name="Toxicon">
        <title>Purification and characterisation of two hemorrhagic metalloproteinases from the venom of the long-nosed viper, Vipera ammodytes ammodytes.</title>
        <authorList>
            <person name="Leonardi A."/>
            <person name="Gubensek F."/>
            <person name="Krizaj I."/>
        </authorList>
    </citation>
    <scope>PROTEIN SEQUENCE</scope>
    <scope>FUNCTION</scope>
    <scope>ACTIVITY REGULATION</scope>
    <scope>BIOPHYSICOCHEMICAL PROPERTIES</scope>
    <scope>SUBUNIT</scope>
    <scope>BLOCKAGE OF N-TERMINUS</scope>
    <source>
        <tissue>Venom</tissue>
    </source>
</reference>
<proteinExistence type="evidence at protein level"/>
<sequence>MVTKYSSIFMSPILSNPPILYFSDCSREXYQKXLTN</sequence>
<keyword id="KW-0903">Direct protein sequencing</keyword>
<keyword id="KW-1015">Disulfide bond</keyword>
<keyword id="KW-1206">Fibrinogenolytic toxin</keyword>
<keyword id="KW-0325">Glycoprotein</keyword>
<keyword id="KW-1200">Hemorrhagic toxin</keyword>
<keyword id="KW-1199">Hemostasis impairing toxin</keyword>
<keyword id="KW-0378">Hydrolase</keyword>
<keyword id="KW-0479">Metal-binding</keyword>
<keyword id="KW-0482">Metalloprotease</keyword>
<keyword id="KW-0645">Protease</keyword>
<keyword id="KW-0964">Secreted</keyword>
<keyword id="KW-0800">Toxin</keyword>
<keyword id="KW-0862">Zinc</keyword>
<evidence type="ECO:0000250" key="1"/>
<evidence type="ECO:0000255" key="2">
    <source>
        <dbReference type="PROSITE-ProRule" id="PRU00276"/>
    </source>
</evidence>
<evidence type="ECO:0000269" key="3">
    <source>
    </source>
</evidence>
<evidence type="ECO:0000305" key="4"/>